<reference key="1">
    <citation type="journal article" date="2012" name="BMC Microbiol.">
        <title>Genome sequence of Desulfitobacterium hafniense DCB-2, a Gram-positive anaerobe capable of dehalogenation and metal reduction.</title>
        <authorList>
            <person name="Kim S.H."/>
            <person name="Harzman C."/>
            <person name="Davis J.K."/>
            <person name="Hutcheson R."/>
            <person name="Broderick J.B."/>
            <person name="Marsh T.L."/>
            <person name="Tiedje J.M."/>
        </authorList>
    </citation>
    <scope>NUCLEOTIDE SEQUENCE [LARGE SCALE GENOMIC DNA]</scope>
    <source>
        <strain>DSM 10664 / DCB-2</strain>
    </source>
</reference>
<name>GATC_DESHD</name>
<accession>B8FP45</accession>
<gene>
    <name evidence="1" type="primary">gatC</name>
    <name type="ordered locus">Dhaf_1518</name>
</gene>
<feature type="chain" id="PRO_1000122564" description="Aspartyl/glutamyl-tRNA(Asn/Gln) amidotransferase subunit C">
    <location>
        <begin position="1"/>
        <end position="94"/>
    </location>
</feature>
<organism>
    <name type="scientific">Desulfitobacterium hafniense (strain DSM 10664 / DCB-2)</name>
    <dbReference type="NCBI Taxonomy" id="272564"/>
    <lineage>
        <taxon>Bacteria</taxon>
        <taxon>Bacillati</taxon>
        <taxon>Bacillota</taxon>
        <taxon>Clostridia</taxon>
        <taxon>Eubacteriales</taxon>
        <taxon>Desulfitobacteriaceae</taxon>
        <taxon>Desulfitobacterium</taxon>
    </lineage>
</organism>
<proteinExistence type="inferred from homology"/>
<evidence type="ECO:0000255" key="1">
    <source>
        <dbReference type="HAMAP-Rule" id="MF_00122"/>
    </source>
</evidence>
<keyword id="KW-0067">ATP-binding</keyword>
<keyword id="KW-0436">Ligase</keyword>
<keyword id="KW-0547">Nucleotide-binding</keyword>
<keyword id="KW-0648">Protein biosynthesis</keyword>
<dbReference type="EC" id="6.3.5.-" evidence="1"/>
<dbReference type="EMBL" id="CP001336">
    <property type="protein sequence ID" value="ACL19570.1"/>
    <property type="molecule type" value="Genomic_DNA"/>
</dbReference>
<dbReference type="RefSeq" id="WP_011461445.1">
    <property type="nucleotide sequence ID" value="NC_011830.1"/>
</dbReference>
<dbReference type="SMR" id="B8FP45"/>
<dbReference type="KEGG" id="dhd:Dhaf_1518"/>
<dbReference type="HOGENOM" id="CLU_105899_1_2_9"/>
<dbReference type="Proteomes" id="UP000007726">
    <property type="component" value="Chromosome"/>
</dbReference>
<dbReference type="GO" id="GO:0050566">
    <property type="term" value="F:asparaginyl-tRNA synthase (glutamine-hydrolyzing) activity"/>
    <property type="evidence" value="ECO:0007669"/>
    <property type="project" value="RHEA"/>
</dbReference>
<dbReference type="GO" id="GO:0005524">
    <property type="term" value="F:ATP binding"/>
    <property type="evidence" value="ECO:0007669"/>
    <property type="project" value="UniProtKB-KW"/>
</dbReference>
<dbReference type="GO" id="GO:0050567">
    <property type="term" value="F:glutaminyl-tRNA synthase (glutamine-hydrolyzing) activity"/>
    <property type="evidence" value="ECO:0007669"/>
    <property type="project" value="UniProtKB-UniRule"/>
</dbReference>
<dbReference type="GO" id="GO:0070681">
    <property type="term" value="P:glutaminyl-tRNAGln biosynthesis via transamidation"/>
    <property type="evidence" value="ECO:0007669"/>
    <property type="project" value="TreeGrafter"/>
</dbReference>
<dbReference type="GO" id="GO:0006450">
    <property type="term" value="P:regulation of translational fidelity"/>
    <property type="evidence" value="ECO:0007669"/>
    <property type="project" value="InterPro"/>
</dbReference>
<dbReference type="GO" id="GO:0006412">
    <property type="term" value="P:translation"/>
    <property type="evidence" value="ECO:0007669"/>
    <property type="project" value="UniProtKB-UniRule"/>
</dbReference>
<dbReference type="Gene3D" id="1.10.20.60">
    <property type="entry name" value="Glu-tRNAGln amidotransferase C subunit, N-terminal domain"/>
    <property type="match status" value="1"/>
</dbReference>
<dbReference type="HAMAP" id="MF_00122">
    <property type="entry name" value="GatC"/>
    <property type="match status" value="1"/>
</dbReference>
<dbReference type="InterPro" id="IPR036113">
    <property type="entry name" value="Asp/Glu-ADT_sf_sub_c"/>
</dbReference>
<dbReference type="InterPro" id="IPR003837">
    <property type="entry name" value="GatC"/>
</dbReference>
<dbReference type="NCBIfam" id="TIGR00135">
    <property type="entry name" value="gatC"/>
    <property type="match status" value="1"/>
</dbReference>
<dbReference type="PANTHER" id="PTHR15004">
    <property type="entry name" value="GLUTAMYL-TRNA(GLN) AMIDOTRANSFERASE SUBUNIT C, MITOCHONDRIAL"/>
    <property type="match status" value="1"/>
</dbReference>
<dbReference type="PANTHER" id="PTHR15004:SF0">
    <property type="entry name" value="GLUTAMYL-TRNA(GLN) AMIDOTRANSFERASE SUBUNIT C, MITOCHONDRIAL"/>
    <property type="match status" value="1"/>
</dbReference>
<dbReference type="Pfam" id="PF02686">
    <property type="entry name" value="GatC"/>
    <property type="match status" value="1"/>
</dbReference>
<dbReference type="SUPFAM" id="SSF141000">
    <property type="entry name" value="Glu-tRNAGln amidotransferase C subunit"/>
    <property type="match status" value="1"/>
</dbReference>
<sequence length="94" mass="10653">MKISREEVEHVAFLARLELTEEELVTNTEQLNSILDYAAMLEKLNTDDIKPTAHAVPLHNVLREDQVKPSMAREKVLANAPDAQDGFFKVPRIV</sequence>
<comment type="function">
    <text evidence="1">Allows the formation of correctly charged Asn-tRNA(Asn) or Gln-tRNA(Gln) through the transamidation of misacylated Asp-tRNA(Asn) or Glu-tRNA(Gln) in organisms which lack either or both of asparaginyl-tRNA or glutaminyl-tRNA synthetases. The reaction takes place in the presence of glutamine and ATP through an activated phospho-Asp-tRNA(Asn) or phospho-Glu-tRNA(Gln).</text>
</comment>
<comment type="catalytic activity">
    <reaction evidence="1">
        <text>L-glutamyl-tRNA(Gln) + L-glutamine + ATP + H2O = L-glutaminyl-tRNA(Gln) + L-glutamate + ADP + phosphate + H(+)</text>
        <dbReference type="Rhea" id="RHEA:17521"/>
        <dbReference type="Rhea" id="RHEA-COMP:9681"/>
        <dbReference type="Rhea" id="RHEA-COMP:9684"/>
        <dbReference type="ChEBI" id="CHEBI:15377"/>
        <dbReference type="ChEBI" id="CHEBI:15378"/>
        <dbReference type="ChEBI" id="CHEBI:29985"/>
        <dbReference type="ChEBI" id="CHEBI:30616"/>
        <dbReference type="ChEBI" id="CHEBI:43474"/>
        <dbReference type="ChEBI" id="CHEBI:58359"/>
        <dbReference type="ChEBI" id="CHEBI:78520"/>
        <dbReference type="ChEBI" id="CHEBI:78521"/>
        <dbReference type="ChEBI" id="CHEBI:456216"/>
    </reaction>
</comment>
<comment type="catalytic activity">
    <reaction evidence="1">
        <text>L-aspartyl-tRNA(Asn) + L-glutamine + ATP + H2O = L-asparaginyl-tRNA(Asn) + L-glutamate + ADP + phosphate + 2 H(+)</text>
        <dbReference type="Rhea" id="RHEA:14513"/>
        <dbReference type="Rhea" id="RHEA-COMP:9674"/>
        <dbReference type="Rhea" id="RHEA-COMP:9677"/>
        <dbReference type="ChEBI" id="CHEBI:15377"/>
        <dbReference type="ChEBI" id="CHEBI:15378"/>
        <dbReference type="ChEBI" id="CHEBI:29985"/>
        <dbReference type="ChEBI" id="CHEBI:30616"/>
        <dbReference type="ChEBI" id="CHEBI:43474"/>
        <dbReference type="ChEBI" id="CHEBI:58359"/>
        <dbReference type="ChEBI" id="CHEBI:78515"/>
        <dbReference type="ChEBI" id="CHEBI:78516"/>
        <dbReference type="ChEBI" id="CHEBI:456216"/>
    </reaction>
</comment>
<comment type="subunit">
    <text evidence="1">Heterotrimer of A, B and C subunits.</text>
</comment>
<comment type="similarity">
    <text evidence="1">Belongs to the GatC family.</text>
</comment>
<protein>
    <recommendedName>
        <fullName evidence="1">Aspartyl/glutamyl-tRNA(Asn/Gln) amidotransferase subunit C</fullName>
        <shortName evidence="1">Asp/Glu-ADT subunit C</shortName>
        <ecNumber evidence="1">6.3.5.-</ecNumber>
    </recommendedName>
</protein>